<reference key="1">
    <citation type="journal article" date="2008" name="PLoS ONE">
        <title>A recalibrated molecular clock and independent origins for the cholera pandemic clones.</title>
        <authorList>
            <person name="Feng L."/>
            <person name="Reeves P.R."/>
            <person name="Lan R."/>
            <person name="Ren Y."/>
            <person name="Gao C."/>
            <person name="Zhou Z."/>
            <person name="Ren Y."/>
            <person name="Cheng J."/>
            <person name="Wang W."/>
            <person name="Wang J."/>
            <person name="Qian W."/>
            <person name="Li D."/>
            <person name="Wang L."/>
        </authorList>
    </citation>
    <scope>NUCLEOTIDE SEQUENCE [LARGE SCALE GENOMIC DNA]</scope>
    <source>
        <strain>M66-2</strain>
    </source>
</reference>
<keyword id="KW-0548">Nucleotidyltransferase</keyword>
<keyword id="KW-0808">Transferase</keyword>
<sequence>MSHHPDLSVSLDQLLLRKEVRVRQQGEWLKRHSLPLVSFTVNMPGAVKLNAASQTVMDAGMRAIQELCQKTGWRQVACQLLVEKTGPEAFVVIQAPSASMLKKAMMKIEREHPLGRLMDLDVIDVDGHIISRQGAQLPRRRCLLCERDAVICARSRRHSVEALLAKIEEMTHDYSCCA</sequence>
<organism>
    <name type="scientific">Vibrio cholerae serotype O1 (strain M66-2)</name>
    <dbReference type="NCBI Taxonomy" id="579112"/>
    <lineage>
        <taxon>Bacteria</taxon>
        <taxon>Pseudomonadati</taxon>
        <taxon>Pseudomonadota</taxon>
        <taxon>Gammaproteobacteria</taxon>
        <taxon>Vibrionales</taxon>
        <taxon>Vibrionaceae</taxon>
        <taxon>Vibrio</taxon>
    </lineage>
</organism>
<feature type="chain" id="PRO_1000189609" description="Probable apo-citrate lyase phosphoribosyl-dephospho-CoA transferase">
    <location>
        <begin position="1"/>
        <end position="178"/>
    </location>
</feature>
<protein>
    <recommendedName>
        <fullName evidence="1">Probable apo-citrate lyase phosphoribosyl-dephospho-CoA transferase</fullName>
        <ecNumber evidence="1">2.7.7.61</ecNumber>
    </recommendedName>
    <alternativeName>
        <fullName evidence="1">Apo-ACP nucleodityltransferase</fullName>
    </alternativeName>
    <alternativeName>
        <fullName evidence="1">Holo-ACP synthase</fullName>
    </alternativeName>
    <alternativeName>
        <fullName evidence="1">Holo-citrate lyase synthase</fullName>
    </alternativeName>
</protein>
<name>CITX_VIBCM</name>
<proteinExistence type="inferred from homology"/>
<gene>
    <name evidence="1" type="primary">citX</name>
    <name type="ordered locus">VCM66_0758</name>
</gene>
<accession>C3LT53</accession>
<comment type="function">
    <text evidence="1">Transfers 2-(5''-triphosphoribosyl)-3'-dephosphocoenzyme-A on a serine residue to the apo-acyl carrier protein (gamma chain) of the citrate lyase to yield holo-acyl carrier protein.</text>
</comment>
<comment type="catalytic activity">
    <reaction evidence="1">
        <text>apo-[citrate lyase ACP] + 2'-(5''-triphospho-alpha-D-ribosyl)-3'-dephospho-CoA = holo-[citrate lyase ACP] + diphosphate</text>
        <dbReference type="Rhea" id="RHEA:16333"/>
        <dbReference type="Rhea" id="RHEA-COMP:10157"/>
        <dbReference type="Rhea" id="RHEA-COMP:10158"/>
        <dbReference type="ChEBI" id="CHEBI:29999"/>
        <dbReference type="ChEBI" id="CHEBI:33019"/>
        <dbReference type="ChEBI" id="CHEBI:61378"/>
        <dbReference type="ChEBI" id="CHEBI:82683"/>
        <dbReference type="EC" id="2.7.7.61"/>
    </reaction>
</comment>
<comment type="similarity">
    <text evidence="1">Belongs to the CitX family.</text>
</comment>
<evidence type="ECO:0000255" key="1">
    <source>
        <dbReference type="HAMAP-Rule" id="MF_00398"/>
    </source>
</evidence>
<dbReference type="EC" id="2.7.7.61" evidence="1"/>
<dbReference type="EMBL" id="CP001233">
    <property type="protein sequence ID" value="ACP05079.1"/>
    <property type="molecule type" value="Genomic_DNA"/>
</dbReference>
<dbReference type="RefSeq" id="WP_000018088.1">
    <property type="nucleotide sequence ID" value="NC_012578.1"/>
</dbReference>
<dbReference type="SMR" id="C3LT53"/>
<dbReference type="KEGG" id="vcm:VCM66_0758"/>
<dbReference type="HOGENOM" id="CLU_104529_1_0_6"/>
<dbReference type="Proteomes" id="UP000001217">
    <property type="component" value="Chromosome I"/>
</dbReference>
<dbReference type="GO" id="GO:0050519">
    <property type="term" value="F:holo-citrate lyase synthase activity"/>
    <property type="evidence" value="ECO:0007669"/>
    <property type="project" value="UniProtKB-UniRule"/>
</dbReference>
<dbReference type="GO" id="GO:0051191">
    <property type="term" value="P:prosthetic group biosynthetic process"/>
    <property type="evidence" value="ECO:0007669"/>
    <property type="project" value="InterPro"/>
</dbReference>
<dbReference type="HAMAP" id="MF_00398">
    <property type="entry name" value="CitX"/>
    <property type="match status" value="1"/>
</dbReference>
<dbReference type="InterPro" id="IPR005551">
    <property type="entry name" value="CitX"/>
</dbReference>
<dbReference type="NCBIfam" id="TIGR03124">
    <property type="entry name" value="citrate_citX"/>
    <property type="match status" value="1"/>
</dbReference>
<dbReference type="NCBIfam" id="NF002383">
    <property type="entry name" value="PRK01392.1"/>
    <property type="match status" value="1"/>
</dbReference>
<dbReference type="Pfam" id="PF03802">
    <property type="entry name" value="CitX"/>
    <property type="match status" value="1"/>
</dbReference>